<gene>
    <name evidence="2" type="primary">N</name>
</gene>
<protein>
    <recommendedName>
        <fullName evidence="2">Nucleoprotein</fullName>
    </recommendedName>
    <alternativeName>
        <fullName evidence="2">Nucleocapsid protein</fullName>
        <shortName evidence="2">NC</shortName>
        <shortName evidence="2">Protein N</shortName>
    </alternativeName>
</protein>
<keyword id="KW-0013">ADP-ribosylation</keyword>
<keyword id="KW-1040">Host Golgi apparatus</keyword>
<keyword id="KW-0597">Phosphoprotein</keyword>
<keyword id="KW-0687">Ribonucleoprotein</keyword>
<keyword id="KW-0694">RNA-binding</keyword>
<keyword id="KW-0804">Transcription</keyword>
<keyword id="KW-0805">Transcription regulation</keyword>
<keyword id="KW-0543">Viral nucleoprotein</keyword>
<keyword id="KW-0946">Virion</keyword>
<reference key="1">
    <citation type="journal article" date="1993" name="Virology">
        <title>Sequence analysis of the nucleocapsid protein gene of rat coronavirus SDAV-681.</title>
        <authorList>
            <person name="Kunita S."/>
            <person name="Mori M."/>
            <person name="Terada E."/>
        </authorList>
    </citation>
    <scope>NUCLEOTIDE SEQUENCE [GENOMIC RNA]</scope>
</reference>
<reference key="2">
    <citation type="journal article" date="2000" name="Clin. Diagn. Lab. Immunol.">
        <title>Primary structure of the sialodacryoadenitis virus genome: sequence of the structural-protein region and its application for differential diagnosis.</title>
        <authorList>
            <person name="Yoo D."/>
            <person name="Pei Y."/>
            <person name="Christie N."/>
            <person name="Cooper M."/>
        </authorList>
    </citation>
    <scope>NUCLEOTIDE SEQUENCE [GENOMIC RNA]</scope>
</reference>
<sequence>MSFVPGQENAGSRSSSGNRAGNGILKKTTWADQTERGQNNGNRGRRNQPKQTATTQPNTGSVVPHYSWFSGITQFQKGKEFQFAGGQGVPIANGIPPSEQKGYWYRHNRRSFKTPDGQQKQLLPRWYFYYLGTGPHAGASFGDSIEGVFWVANSQADTNTSADIVERDPSSHEAIPTRFAPGTVLPQGFYVEGSGRSAPASRSGSRSQSRGPNNRARSSSNQRQPASTVKPDMAEEIAALVLAKLGKDAGQPKQVTKQSAKEVRQKILNKPRQKRTPNKQCPVQQCFGKRGPNQNFGGPEMLKLGTSDPQFPILAELAPTPGAFFFGSKLELVKKNSGGVDEPTKDVYELQYSGAVRFDSTLPGFETIMKVLNENLNAYQNQAGGADVVSPKPQRKRGTKQTAQKEELDSISVAKPKSAVQRNVSRELTPEDRSLLAQILDDGVVPDGLDDSNV</sequence>
<comment type="function">
    <text evidence="2">Packages the positive strand viral genome RNA into a helical ribonucleocapsid (RNP) and plays a fundamental role during virion assembly through its interactions with the viral genome and membrane protein M. Plays an important role in enhancing the efficiency of subgenomic viral RNA transcription as well as viral replication.</text>
</comment>
<comment type="subunit">
    <text evidence="2">Homooligomer. Both monomeric and oligomeric forms interact with RNA. Interacts with protein M. Interacts with NSP3; this interaction serves to tether the genome to the newly translated replicase-transcriptase complex at a very early stage of infection.</text>
</comment>
<comment type="subcellular location">
    <subcellularLocation>
        <location evidence="2">Virion</location>
    </subcellularLocation>
    <subcellularLocation>
        <location evidence="2">Host endoplasmic reticulum-Golgi intermediate compartment</location>
    </subcellularLocation>
    <subcellularLocation>
        <location evidence="2">Host Golgi apparatus</location>
    </subcellularLocation>
    <text evidence="2">Located inside the virion, complexed with the viral RNA. Probably associates with ER-derived membranes where it participates in viral RNA synthesis and virus budding.</text>
</comment>
<comment type="PTM">
    <text evidence="2">ADP-ribosylated. The ADP-ribosylation is retained in the virion during infection.</text>
</comment>
<comment type="PTM">
    <text evidence="2">Phosphorylated on serine and threonine residues.</text>
</comment>
<comment type="similarity">
    <text evidence="2">Belongs to the betacoronavirus nucleocapsid protein family.</text>
</comment>
<feature type="chain" id="PRO_0000106018" description="Nucleoprotein">
    <location>
        <begin position="1"/>
        <end position="454"/>
    </location>
</feature>
<feature type="domain" description="CoV N NTD" evidence="3">
    <location>
        <begin position="64"/>
        <end position="193"/>
    </location>
</feature>
<feature type="domain" description="CoV N CTD" evidence="4">
    <location>
        <begin position="260"/>
        <end position="383"/>
    </location>
</feature>
<feature type="region of interest" description="Disordered" evidence="5">
    <location>
        <begin position="1"/>
        <end position="62"/>
    </location>
</feature>
<feature type="region of interest" description="RNA-binding" evidence="2">
    <location>
        <begin position="56"/>
        <end position="197"/>
    </location>
</feature>
<feature type="region of interest" description="Disordered" evidence="5">
    <location>
        <begin position="186"/>
        <end position="230"/>
    </location>
</feature>
<feature type="region of interest" description="Dimerization" evidence="2">
    <location>
        <begin position="267"/>
        <end position="384"/>
    </location>
</feature>
<feature type="region of interest" description="Disordered" evidence="5">
    <location>
        <begin position="271"/>
        <end position="290"/>
    </location>
</feature>
<feature type="region of interest" description="Disordered" evidence="5">
    <location>
        <begin position="383"/>
        <end position="428"/>
    </location>
</feature>
<feature type="compositionally biased region" description="Low complexity" evidence="5">
    <location>
        <begin position="9"/>
        <end position="23"/>
    </location>
</feature>
<feature type="compositionally biased region" description="Polar residues" evidence="5">
    <location>
        <begin position="49"/>
        <end position="61"/>
    </location>
</feature>
<feature type="compositionally biased region" description="Low complexity" evidence="5">
    <location>
        <begin position="193"/>
        <end position="212"/>
    </location>
</feature>
<feature type="compositionally biased region" description="Polar residues" evidence="5">
    <location>
        <begin position="215"/>
        <end position="227"/>
    </location>
</feature>
<feature type="binding site" evidence="1">
    <location>
        <position position="109"/>
    </location>
    <ligand>
        <name>RNA</name>
        <dbReference type="ChEBI" id="CHEBI:33697"/>
    </ligand>
</feature>
<feature type="binding site" evidence="1">
    <location>
        <position position="125"/>
    </location>
    <ligand>
        <name>RNA</name>
        <dbReference type="ChEBI" id="CHEBI:33697"/>
    </ligand>
</feature>
<feature type="binding site" evidence="1">
    <location>
        <position position="167"/>
    </location>
    <ligand>
        <name>RNA</name>
        <dbReference type="ChEBI" id="CHEBI:33697"/>
    </ligand>
</feature>
<feature type="modified residue" description="Phosphoserine; by host" evidence="2">
    <location>
        <position position="170"/>
    </location>
</feature>
<feature type="modified residue" description="Phosphothreonine; by host" evidence="2">
    <location>
        <position position="177"/>
    </location>
</feature>
<feature type="modified residue" description="Phosphoserine; by host" evidence="2">
    <location>
        <position position="194"/>
    </location>
</feature>
<feature type="modified residue" description="Phosphoserine; by host" evidence="2">
    <location>
        <position position="390"/>
    </location>
</feature>
<feature type="modified residue" description="Phosphoserine; by host" evidence="2">
    <location>
        <position position="425"/>
    </location>
</feature>
<feature type="modified residue" description="Phosphothreonine; by host" evidence="2">
    <location>
        <position position="429"/>
    </location>
</feature>
<feature type="sequence conflict" description="In Ref. 2; AAF97743." evidence="6" ref="2">
    <original>K</original>
    <variation>N</variation>
    <location>
        <position position="244"/>
    </location>
</feature>
<accession>Q02915</accession>
<accession>Q9IKC6</accession>
<organismHost>
    <name type="scientific">Rattus norvegicus</name>
    <name type="common">Rat</name>
    <dbReference type="NCBI Taxonomy" id="10116"/>
</organismHost>
<evidence type="ECO:0000250" key="1">
    <source>
        <dbReference type="UniProtKB" id="P0DTC9"/>
    </source>
</evidence>
<evidence type="ECO:0000255" key="2">
    <source>
        <dbReference type="HAMAP-Rule" id="MF_04096"/>
    </source>
</evidence>
<evidence type="ECO:0000255" key="3">
    <source>
        <dbReference type="PROSITE-ProRule" id="PRU01276"/>
    </source>
</evidence>
<evidence type="ECO:0000255" key="4">
    <source>
        <dbReference type="PROSITE-ProRule" id="PRU01277"/>
    </source>
</evidence>
<evidence type="ECO:0000256" key="5">
    <source>
        <dbReference type="SAM" id="MobiDB-lite"/>
    </source>
</evidence>
<evidence type="ECO:0000305" key="6"/>
<dbReference type="EMBL" id="D10760">
    <property type="protein sequence ID" value="BAA01591.1"/>
    <property type="molecule type" value="Genomic_RNA"/>
</dbReference>
<dbReference type="EMBL" id="AF207551">
    <property type="protein sequence ID" value="AAF97743.1"/>
    <property type="molecule type" value="Genomic_RNA"/>
</dbReference>
<dbReference type="PIR" id="A45396">
    <property type="entry name" value="A45396"/>
</dbReference>
<dbReference type="SMR" id="Q02915"/>
<dbReference type="GO" id="GO:0044172">
    <property type="term" value="C:host cell endoplasmic reticulum-Golgi intermediate compartment"/>
    <property type="evidence" value="ECO:0007669"/>
    <property type="project" value="UniProtKB-SubCell"/>
</dbReference>
<dbReference type="GO" id="GO:0044177">
    <property type="term" value="C:host cell Golgi apparatus"/>
    <property type="evidence" value="ECO:0007669"/>
    <property type="project" value="UniProtKB-SubCell"/>
</dbReference>
<dbReference type="GO" id="GO:1990904">
    <property type="term" value="C:ribonucleoprotein complex"/>
    <property type="evidence" value="ECO:0007669"/>
    <property type="project" value="UniProtKB-KW"/>
</dbReference>
<dbReference type="GO" id="GO:0019013">
    <property type="term" value="C:viral nucleocapsid"/>
    <property type="evidence" value="ECO:0007669"/>
    <property type="project" value="UniProtKB-UniRule"/>
</dbReference>
<dbReference type="GO" id="GO:0003723">
    <property type="term" value="F:RNA binding"/>
    <property type="evidence" value="ECO:0007669"/>
    <property type="project" value="UniProtKB-UniRule"/>
</dbReference>
<dbReference type="CDD" id="cd21595">
    <property type="entry name" value="CoV_N-CTD"/>
    <property type="match status" value="1"/>
</dbReference>
<dbReference type="CDD" id="cd21554">
    <property type="entry name" value="CoV_N-NTD"/>
    <property type="match status" value="1"/>
</dbReference>
<dbReference type="HAMAP" id="MF_04096">
    <property type="entry name" value="BETA_CORONA_NCAP"/>
    <property type="match status" value="1"/>
</dbReference>
<dbReference type="InterPro" id="IPR044344">
    <property type="entry name" value="N_prot_C_CoV"/>
</dbReference>
<dbReference type="InterPro" id="IPR044345">
    <property type="entry name" value="N_prot_N_CoV"/>
</dbReference>
<dbReference type="InterPro" id="IPR043505">
    <property type="entry name" value="NCAP_bCoV"/>
</dbReference>
<dbReference type="InterPro" id="IPR001218">
    <property type="entry name" value="Nucleocap_CoV"/>
</dbReference>
<dbReference type="InterPro" id="IPR037179">
    <property type="entry name" value="Nucleocapsid_C"/>
</dbReference>
<dbReference type="InterPro" id="IPR037195">
    <property type="entry name" value="Nucleocapsid_N"/>
</dbReference>
<dbReference type="Pfam" id="PF00937">
    <property type="entry name" value="CoV_nucleocap"/>
    <property type="match status" value="1"/>
</dbReference>
<dbReference type="PIRSF" id="PIRSF003888">
    <property type="entry name" value="Corona_nucleocap"/>
    <property type="match status" value="1"/>
</dbReference>
<dbReference type="SUPFAM" id="SSF110304">
    <property type="entry name" value="Coronavirus RNA-binding domain"/>
    <property type="match status" value="1"/>
</dbReference>
<dbReference type="SUPFAM" id="SSF103068">
    <property type="entry name" value="Nucleocapsid protein dimerization domain"/>
    <property type="match status" value="1"/>
</dbReference>
<dbReference type="PROSITE" id="PS51929">
    <property type="entry name" value="COV_N_CTD"/>
    <property type="match status" value="1"/>
</dbReference>
<dbReference type="PROSITE" id="PS51928">
    <property type="entry name" value="COV_N_NTD"/>
    <property type="match status" value="1"/>
</dbReference>
<proteinExistence type="inferred from homology"/>
<name>NCAP_CVRSD</name>
<organism>
    <name type="scientific">Rat coronavirus (strain 681)</name>
    <name type="common">RCV-SDAV</name>
    <name type="synonym">Sialodacryoadenitis virus SDAV-681</name>
    <dbReference type="NCBI Taxonomy" id="33740"/>
    <lineage>
        <taxon>Viruses</taxon>
        <taxon>Riboviria</taxon>
        <taxon>Orthornavirae</taxon>
        <taxon>Pisuviricota</taxon>
        <taxon>Pisoniviricetes</taxon>
        <taxon>Nidovirales</taxon>
        <taxon>Cornidovirineae</taxon>
        <taxon>Coronaviridae</taxon>
        <taxon>Orthocoronavirinae</taxon>
        <taxon>Betacoronavirus</taxon>
        <taxon>Embecovirus</taxon>
        <taxon>Murine coronavirus</taxon>
    </lineage>
</organism>